<organism>
    <name type="scientific">Pseudomonas aeruginosa (strain ATCC 15692 / DSM 22644 / CIP 104116 / JCM 14847 / LMG 12228 / 1C / PRS 101 / PAO1)</name>
    <dbReference type="NCBI Taxonomy" id="208964"/>
    <lineage>
        <taxon>Bacteria</taxon>
        <taxon>Pseudomonadati</taxon>
        <taxon>Pseudomonadota</taxon>
        <taxon>Gammaproteobacteria</taxon>
        <taxon>Pseudomonadales</taxon>
        <taxon>Pseudomonadaceae</taxon>
        <taxon>Pseudomonas</taxon>
    </lineage>
</organism>
<dbReference type="EC" id="2.9.1.3" evidence="1"/>
<dbReference type="EMBL" id="AE004091">
    <property type="protein sequence ID" value="AAG05032.1"/>
    <property type="molecule type" value="Genomic_DNA"/>
</dbReference>
<dbReference type="PIR" id="H83439">
    <property type="entry name" value="H83439"/>
</dbReference>
<dbReference type="RefSeq" id="NP_250334.1">
    <property type="nucleotide sequence ID" value="NC_002516.2"/>
</dbReference>
<dbReference type="SMR" id="Q9I382"/>
<dbReference type="FunCoup" id="Q9I382">
    <property type="interactions" value="10"/>
</dbReference>
<dbReference type="STRING" id="208964.PA1643"/>
<dbReference type="PaxDb" id="208964-PA1643"/>
<dbReference type="DNASU" id="878548"/>
<dbReference type="GeneID" id="878548"/>
<dbReference type="KEGG" id="pae:PA1643"/>
<dbReference type="PATRIC" id="fig|208964.12.peg.1703"/>
<dbReference type="PseudoCAP" id="PA1643"/>
<dbReference type="HOGENOM" id="CLU_043456_1_0_6"/>
<dbReference type="InParanoid" id="Q9I382"/>
<dbReference type="OrthoDB" id="9808735at2"/>
<dbReference type="PhylomeDB" id="Q9I382"/>
<dbReference type="BioCyc" id="PAER208964:G1FZ6-1673-MONOMER"/>
<dbReference type="Proteomes" id="UP000002438">
    <property type="component" value="Chromosome"/>
</dbReference>
<dbReference type="GO" id="GO:0016765">
    <property type="term" value="F:transferase activity, transferring alkyl or aryl (other than methyl) groups"/>
    <property type="evidence" value="ECO:0007669"/>
    <property type="project" value="UniProtKB-UniRule"/>
</dbReference>
<dbReference type="GO" id="GO:0043828">
    <property type="term" value="F:tRNA 2-selenouridine synthase activity"/>
    <property type="evidence" value="ECO:0000318"/>
    <property type="project" value="GO_Central"/>
</dbReference>
<dbReference type="GO" id="GO:0002098">
    <property type="term" value="P:tRNA wobble uridine modification"/>
    <property type="evidence" value="ECO:0000318"/>
    <property type="project" value="GO_Central"/>
</dbReference>
<dbReference type="CDD" id="cd01520">
    <property type="entry name" value="RHOD_YbbB"/>
    <property type="match status" value="1"/>
</dbReference>
<dbReference type="FunFam" id="3.40.250.10:FF:000009">
    <property type="entry name" value="tRNA 2-selenouridine/geranyl-2-thiouridine synthase"/>
    <property type="match status" value="1"/>
</dbReference>
<dbReference type="Gene3D" id="3.40.250.10">
    <property type="entry name" value="Rhodanese-like domain"/>
    <property type="match status" value="1"/>
</dbReference>
<dbReference type="HAMAP" id="MF_01622">
    <property type="entry name" value="tRNA_sel_U_synth"/>
    <property type="match status" value="1"/>
</dbReference>
<dbReference type="InterPro" id="IPR027417">
    <property type="entry name" value="P-loop_NTPase"/>
</dbReference>
<dbReference type="InterPro" id="IPR001763">
    <property type="entry name" value="Rhodanese-like_dom"/>
</dbReference>
<dbReference type="InterPro" id="IPR036873">
    <property type="entry name" value="Rhodanese-like_dom_sf"/>
</dbReference>
<dbReference type="InterPro" id="IPR017582">
    <property type="entry name" value="SelU"/>
</dbReference>
<dbReference type="NCBIfam" id="NF008751">
    <property type="entry name" value="PRK11784.1-3"/>
    <property type="match status" value="1"/>
</dbReference>
<dbReference type="NCBIfam" id="TIGR03167">
    <property type="entry name" value="tRNA_sel_U_synt"/>
    <property type="match status" value="1"/>
</dbReference>
<dbReference type="PANTHER" id="PTHR30401">
    <property type="entry name" value="TRNA 2-SELENOURIDINE SYNTHASE"/>
    <property type="match status" value="1"/>
</dbReference>
<dbReference type="PANTHER" id="PTHR30401:SF0">
    <property type="entry name" value="TRNA 2-SELENOURIDINE SYNTHASE"/>
    <property type="match status" value="1"/>
</dbReference>
<dbReference type="SMART" id="SM00450">
    <property type="entry name" value="RHOD"/>
    <property type="match status" value="1"/>
</dbReference>
<dbReference type="SUPFAM" id="SSF52540">
    <property type="entry name" value="P-loop containing nucleoside triphosphate hydrolases"/>
    <property type="match status" value="1"/>
</dbReference>
<dbReference type="SUPFAM" id="SSF52821">
    <property type="entry name" value="Rhodanese/Cell cycle control phosphatase"/>
    <property type="match status" value="1"/>
</dbReference>
<dbReference type="PROSITE" id="PS50206">
    <property type="entry name" value="RHODANESE_3"/>
    <property type="match status" value="1"/>
</dbReference>
<protein>
    <recommendedName>
        <fullName evidence="1">tRNA 2-selenouridine synthase</fullName>
        <ecNumber evidence="1">2.9.1.3</ecNumber>
    </recommendedName>
</protein>
<reference key="1">
    <citation type="journal article" date="2000" name="Nature">
        <title>Complete genome sequence of Pseudomonas aeruginosa PAO1, an opportunistic pathogen.</title>
        <authorList>
            <person name="Stover C.K."/>
            <person name="Pham X.-Q.T."/>
            <person name="Erwin A.L."/>
            <person name="Mizoguchi S.D."/>
            <person name="Warrener P."/>
            <person name="Hickey M.J."/>
            <person name="Brinkman F.S.L."/>
            <person name="Hufnagle W.O."/>
            <person name="Kowalik D.J."/>
            <person name="Lagrou M."/>
            <person name="Garber R.L."/>
            <person name="Goltry L."/>
            <person name="Tolentino E."/>
            <person name="Westbrock-Wadman S."/>
            <person name="Yuan Y."/>
            <person name="Brody L.L."/>
            <person name="Coulter S.N."/>
            <person name="Folger K.R."/>
            <person name="Kas A."/>
            <person name="Larbig K."/>
            <person name="Lim R.M."/>
            <person name="Smith K.A."/>
            <person name="Spencer D.H."/>
            <person name="Wong G.K.-S."/>
            <person name="Wu Z."/>
            <person name="Paulsen I.T."/>
            <person name="Reizer J."/>
            <person name="Saier M.H. Jr."/>
            <person name="Hancock R.E.W."/>
            <person name="Lory S."/>
            <person name="Olson M.V."/>
        </authorList>
    </citation>
    <scope>NUCLEOTIDE SEQUENCE [LARGE SCALE GENOMIC DNA]</scope>
    <source>
        <strain>ATCC 15692 / DSM 22644 / CIP 104116 / JCM 14847 / LMG 12228 / 1C / PRS 101 / PAO1</strain>
    </source>
</reference>
<keyword id="KW-1185">Reference proteome</keyword>
<keyword id="KW-0711">Selenium</keyword>
<keyword id="KW-0808">Transferase</keyword>
<comment type="function">
    <text evidence="1">Involved in the post-transcriptional modification of the uridine at the wobble position (U34) of tRNA(Lys), tRNA(Glu) and tRNA(Gln). Catalyzes the conversion of 2-thiouridine (S2U-RNA) to 2-selenouridine (Se2U-RNA). Acts in a two-step process involving geranylation of 2-thiouridine (S2U) to S-geranyl-2-thiouridine (geS2U) and subsequent selenation of the latter derivative to 2-selenouridine (Se2U) in the tRNA chain.</text>
</comment>
<comment type="catalytic activity">
    <reaction evidence="1">
        <text>5-methylaminomethyl-2-thiouridine(34) in tRNA + selenophosphate + (2E)-geranyl diphosphate + H2O + H(+) = 5-methylaminomethyl-2-selenouridine(34) in tRNA + (2E)-thiogeraniol + phosphate + diphosphate</text>
        <dbReference type="Rhea" id="RHEA:42716"/>
        <dbReference type="Rhea" id="RHEA-COMP:10195"/>
        <dbReference type="Rhea" id="RHEA-COMP:10196"/>
        <dbReference type="ChEBI" id="CHEBI:15377"/>
        <dbReference type="ChEBI" id="CHEBI:15378"/>
        <dbReference type="ChEBI" id="CHEBI:16144"/>
        <dbReference type="ChEBI" id="CHEBI:33019"/>
        <dbReference type="ChEBI" id="CHEBI:43474"/>
        <dbReference type="ChEBI" id="CHEBI:58057"/>
        <dbReference type="ChEBI" id="CHEBI:74455"/>
        <dbReference type="ChEBI" id="CHEBI:82743"/>
        <dbReference type="ChEBI" id="CHEBI:143703"/>
        <dbReference type="EC" id="2.9.1.3"/>
    </reaction>
    <physiologicalReaction direction="left-to-right" evidence="1">
        <dbReference type="Rhea" id="RHEA:42717"/>
    </physiologicalReaction>
</comment>
<comment type="catalytic activity">
    <reaction evidence="1">
        <text>5-methylaminomethyl-2-thiouridine(34) in tRNA + (2E)-geranyl diphosphate = 5-methylaminomethyl-S-(2E)-geranyl-thiouridine(34) in tRNA + diphosphate</text>
        <dbReference type="Rhea" id="RHEA:14085"/>
        <dbReference type="Rhea" id="RHEA-COMP:10195"/>
        <dbReference type="Rhea" id="RHEA-COMP:14654"/>
        <dbReference type="ChEBI" id="CHEBI:33019"/>
        <dbReference type="ChEBI" id="CHEBI:58057"/>
        <dbReference type="ChEBI" id="CHEBI:74455"/>
        <dbReference type="ChEBI" id="CHEBI:140632"/>
    </reaction>
    <physiologicalReaction direction="left-to-right" evidence="1">
        <dbReference type="Rhea" id="RHEA:14086"/>
    </physiologicalReaction>
</comment>
<comment type="catalytic activity">
    <reaction evidence="1">
        <text>5-methylaminomethyl-S-(2E)-geranyl-thiouridine(34) in tRNA + selenophosphate + H(+) = 5-methylaminomethyl-2-(Se-phospho)selenouridine(34) in tRNA + (2E)-thiogeraniol</text>
        <dbReference type="Rhea" id="RHEA:60172"/>
        <dbReference type="Rhea" id="RHEA-COMP:14654"/>
        <dbReference type="Rhea" id="RHEA-COMP:15523"/>
        <dbReference type="ChEBI" id="CHEBI:15378"/>
        <dbReference type="ChEBI" id="CHEBI:16144"/>
        <dbReference type="ChEBI" id="CHEBI:140632"/>
        <dbReference type="ChEBI" id="CHEBI:143702"/>
        <dbReference type="ChEBI" id="CHEBI:143703"/>
    </reaction>
    <physiologicalReaction direction="left-to-right" evidence="1">
        <dbReference type="Rhea" id="RHEA:60173"/>
    </physiologicalReaction>
</comment>
<comment type="catalytic activity">
    <reaction evidence="1">
        <text>5-methylaminomethyl-2-(Se-phospho)selenouridine(34) in tRNA + H2O = 5-methylaminomethyl-2-selenouridine(34) in tRNA + phosphate</text>
        <dbReference type="Rhea" id="RHEA:60176"/>
        <dbReference type="Rhea" id="RHEA-COMP:10196"/>
        <dbReference type="Rhea" id="RHEA-COMP:15523"/>
        <dbReference type="ChEBI" id="CHEBI:15377"/>
        <dbReference type="ChEBI" id="CHEBI:43474"/>
        <dbReference type="ChEBI" id="CHEBI:82743"/>
        <dbReference type="ChEBI" id="CHEBI:143702"/>
    </reaction>
    <physiologicalReaction direction="left-to-right" evidence="1">
        <dbReference type="Rhea" id="RHEA:60177"/>
    </physiologicalReaction>
</comment>
<comment type="subunit">
    <text evidence="1">Monomer.</text>
</comment>
<comment type="similarity">
    <text evidence="1">Belongs to the SelU family.</text>
</comment>
<sequence>MRDNTQHYRELFLDDIPLMDVRAPVEYHKGAFPNTVNRPLMNDIERQKVGTSYKQHGQQAAIALGHELVCGALKAERLAAWKAFAEANPNGYLYCFRGGLRSQIVQQWLKQDAGIDYPRVIGGYKALRNFLFETTRAAVDECDFVLVGGLTGCGKTEVIAALDNSLDLEGHANHRGSSFGRRATPQPAQIDFENRLAIDILKKRHRGVGQFVLEDEGRIVGSCSLPLELYQGMQGYPLVWLEDAFEQRVERILRDYVIDLRSEFERVVGVEEGFAAFSAYLQKSLAGIVKRLGGERYQRLAAILVQALEEQGRDGSVDTHRGWIEGLLKEYYDPMYAFQRQSKEDRVEFRGNQAEVIGYLRQRQALRPS</sequence>
<name>SELU_PSEAE</name>
<accession>Q9I382</accession>
<gene>
    <name evidence="1" type="primary">selU</name>
    <name type="ordered locus">PA1643</name>
</gene>
<feature type="chain" id="PRO_0000210864" description="tRNA 2-selenouridine synthase">
    <location>
        <begin position="1"/>
        <end position="369"/>
    </location>
</feature>
<feature type="domain" description="Rhodanese" evidence="1">
    <location>
        <begin position="12"/>
        <end position="136"/>
    </location>
</feature>
<feature type="active site" description="S-selanylcysteine intermediate" evidence="1">
    <location>
        <position position="95"/>
    </location>
</feature>
<proteinExistence type="inferred from homology"/>
<evidence type="ECO:0000255" key="1">
    <source>
        <dbReference type="HAMAP-Rule" id="MF_01622"/>
    </source>
</evidence>